<gene>
    <name type="primary">ND4L</name>
</gene>
<keyword id="KW-0249">Electron transport</keyword>
<keyword id="KW-0472">Membrane</keyword>
<keyword id="KW-0496">Mitochondrion</keyword>
<keyword id="KW-0520">NAD</keyword>
<keyword id="KW-1185">Reference proteome</keyword>
<keyword id="KW-0679">Respiratory chain</keyword>
<keyword id="KW-1278">Translocase</keyword>
<keyword id="KW-0812">Transmembrane</keyword>
<keyword id="KW-1133">Transmembrane helix</keyword>
<keyword id="KW-0813">Transport</keyword>
<keyword id="KW-0830">Ubiquinone</keyword>
<evidence type="ECO:0000250" key="1"/>
<evidence type="ECO:0000255" key="2"/>
<evidence type="ECO:0000305" key="3"/>
<reference key="1">
    <citation type="journal article" date="1988" name="J. Mol. Biol.">
        <title>Nucleotide sequence and gene organization of sea urchin mitochondrial DNA.</title>
        <authorList>
            <person name="Jacobs H.T."/>
            <person name="Elliott D.J."/>
            <person name="Math V.B."/>
            <person name="Farquharson A."/>
        </authorList>
    </citation>
    <scope>NUCLEOTIDE SEQUENCE [GENOMIC DNA]</scope>
</reference>
<sequence>MALLIVILSMFYLGLMGILLNRLHFLSILLCLELLLISLFIGIAIWNNNTGVPQNTTFNLFVLTLVACEASIGLSLMVGLSRTHSSNLVGSLSLLQY</sequence>
<feature type="chain" id="PRO_0000118494" description="NADH-ubiquinone oxidoreductase chain 4L">
    <location>
        <begin position="1"/>
        <end position="97"/>
    </location>
</feature>
<feature type="transmembrane region" description="Helical" evidence="2">
    <location>
        <begin position="1"/>
        <end position="21"/>
    </location>
</feature>
<feature type="transmembrane region" description="Helical" evidence="2">
    <location>
        <begin position="25"/>
        <end position="45"/>
    </location>
</feature>
<feature type="transmembrane region" description="Helical" evidence="2">
    <location>
        <begin position="60"/>
        <end position="80"/>
    </location>
</feature>
<name>NU4LM_STRPU</name>
<proteinExistence type="inferred from homology"/>
<dbReference type="EC" id="7.1.1.2"/>
<dbReference type="EMBL" id="X12631">
    <property type="protein sequence ID" value="CAA31154.2"/>
    <property type="molecule type" value="Genomic_DNA"/>
</dbReference>
<dbReference type="PIR" id="S01502">
    <property type="entry name" value="S01502"/>
</dbReference>
<dbReference type="RefSeq" id="NP_006968.1">
    <property type="nucleotide sequence ID" value="NC_001453.1"/>
</dbReference>
<dbReference type="SMR" id="P15554"/>
<dbReference type="FunCoup" id="P15554">
    <property type="interactions" value="137"/>
</dbReference>
<dbReference type="STRING" id="7668.P15554"/>
<dbReference type="GeneID" id="2652719"/>
<dbReference type="KEGG" id="spu:2652719"/>
<dbReference type="CTD" id="4539"/>
<dbReference type="InParanoid" id="P15554"/>
<dbReference type="OrthoDB" id="6146597at2759"/>
<dbReference type="Proteomes" id="UP000007110">
    <property type="component" value="Unassembled WGS sequence"/>
</dbReference>
<dbReference type="GO" id="GO:0031966">
    <property type="term" value="C:mitochondrial membrane"/>
    <property type="evidence" value="ECO:0007669"/>
    <property type="project" value="UniProtKB-SubCell"/>
</dbReference>
<dbReference type="GO" id="GO:0045271">
    <property type="term" value="C:respiratory chain complex I"/>
    <property type="evidence" value="ECO:0000318"/>
    <property type="project" value="GO_Central"/>
</dbReference>
<dbReference type="GO" id="GO:0008137">
    <property type="term" value="F:NADH dehydrogenase (ubiquinone) activity"/>
    <property type="evidence" value="ECO:0007669"/>
    <property type="project" value="UniProtKB-EC"/>
</dbReference>
<dbReference type="GO" id="GO:0042773">
    <property type="term" value="P:ATP synthesis coupled electron transport"/>
    <property type="evidence" value="ECO:0007669"/>
    <property type="project" value="InterPro"/>
</dbReference>
<dbReference type="Gene3D" id="1.10.287.3510">
    <property type="match status" value="1"/>
</dbReference>
<dbReference type="InterPro" id="IPR001133">
    <property type="entry name" value="NADH_UbQ_OxRdtase_chain4L/K"/>
</dbReference>
<dbReference type="InterPro" id="IPR039428">
    <property type="entry name" value="NUOK/Mnh_C1-like"/>
</dbReference>
<dbReference type="PANTHER" id="PTHR11434:SF0">
    <property type="entry name" value="NADH-UBIQUINONE OXIDOREDUCTASE CHAIN 4L"/>
    <property type="match status" value="1"/>
</dbReference>
<dbReference type="PANTHER" id="PTHR11434">
    <property type="entry name" value="NADH-UBIQUINONE OXIDOREDUCTASE SUBUNIT ND4L"/>
    <property type="match status" value="1"/>
</dbReference>
<dbReference type="Pfam" id="PF00420">
    <property type="entry name" value="Oxidored_q2"/>
    <property type="match status" value="1"/>
</dbReference>
<protein>
    <recommendedName>
        <fullName>NADH-ubiquinone oxidoreductase chain 4L</fullName>
        <ecNumber>7.1.1.2</ecNumber>
    </recommendedName>
    <alternativeName>
        <fullName>NADH dehydrogenase subunit 4L</fullName>
    </alternativeName>
</protein>
<accession>P15554</accession>
<comment type="function">
    <text evidence="1">Core subunit of the mitochondrial membrane respiratory chain NADH dehydrogenase (Complex I) that is believed to belong to the minimal assembly required for catalysis. Complex I functions in the transfer of electrons from NADH to the respiratory chain. The immediate electron acceptor for the enzyme is believed to be ubiquinone (By similarity).</text>
</comment>
<comment type="catalytic activity">
    <reaction>
        <text>a ubiquinone + NADH + 5 H(+)(in) = a ubiquinol + NAD(+) + 4 H(+)(out)</text>
        <dbReference type="Rhea" id="RHEA:29091"/>
        <dbReference type="Rhea" id="RHEA-COMP:9565"/>
        <dbReference type="Rhea" id="RHEA-COMP:9566"/>
        <dbReference type="ChEBI" id="CHEBI:15378"/>
        <dbReference type="ChEBI" id="CHEBI:16389"/>
        <dbReference type="ChEBI" id="CHEBI:17976"/>
        <dbReference type="ChEBI" id="CHEBI:57540"/>
        <dbReference type="ChEBI" id="CHEBI:57945"/>
        <dbReference type="EC" id="7.1.1.2"/>
    </reaction>
</comment>
<comment type="subcellular location">
    <subcellularLocation>
        <location evidence="1">Mitochondrion membrane</location>
        <topology evidence="1">Multi-pass membrane protein</topology>
    </subcellularLocation>
</comment>
<comment type="similarity">
    <text evidence="3">Belongs to the complex I subunit 4L family.</text>
</comment>
<organism>
    <name type="scientific">Strongylocentrotus purpuratus</name>
    <name type="common">Purple sea urchin</name>
    <dbReference type="NCBI Taxonomy" id="7668"/>
    <lineage>
        <taxon>Eukaryota</taxon>
        <taxon>Metazoa</taxon>
        <taxon>Echinodermata</taxon>
        <taxon>Eleutherozoa</taxon>
        <taxon>Echinozoa</taxon>
        <taxon>Echinoidea</taxon>
        <taxon>Euechinoidea</taxon>
        <taxon>Echinacea</taxon>
        <taxon>Camarodonta</taxon>
        <taxon>Echinidea</taxon>
        <taxon>Strongylocentrotidae</taxon>
        <taxon>Strongylocentrotus</taxon>
    </lineage>
</organism>
<geneLocation type="mitochondrion"/>